<reference key="1">
    <citation type="journal article" date="2004" name="Proc. Natl. Acad. Sci. U.S.A.">
        <title>Comparison of the genome of the oral pathogen Treponema denticola with other spirochete genomes.</title>
        <authorList>
            <person name="Seshadri R."/>
            <person name="Myers G.S.A."/>
            <person name="Tettelin H."/>
            <person name="Eisen J.A."/>
            <person name="Heidelberg J.F."/>
            <person name="Dodson R.J."/>
            <person name="Davidsen T.M."/>
            <person name="DeBoy R.T."/>
            <person name="Fouts D.E."/>
            <person name="Haft D.H."/>
            <person name="Selengut J."/>
            <person name="Ren Q."/>
            <person name="Brinkac L.M."/>
            <person name="Madupu R."/>
            <person name="Kolonay J.F."/>
            <person name="Durkin S.A."/>
            <person name="Daugherty S.C."/>
            <person name="Shetty J."/>
            <person name="Shvartsbeyn A."/>
            <person name="Gebregeorgis E."/>
            <person name="Geer K."/>
            <person name="Tsegaye G."/>
            <person name="Malek J.A."/>
            <person name="Ayodeji B."/>
            <person name="Shatsman S."/>
            <person name="McLeod M.P."/>
            <person name="Smajs D."/>
            <person name="Howell J.K."/>
            <person name="Pal S."/>
            <person name="Amin A."/>
            <person name="Vashisth P."/>
            <person name="McNeill T.Z."/>
            <person name="Xiang Q."/>
            <person name="Sodergren E."/>
            <person name="Baca E."/>
            <person name="Weinstock G.M."/>
            <person name="Norris S.J."/>
            <person name="Fraser C.M."/>
            <person name="Paulsen I.T."/>
        </authorList>
    </citation>
    <scope>NUCLEOTIDE SEQUENCE [LARGE SCALE GENOMIC DNA]</scope>
    <source>
        <strain>ATCC 35405 / DSM 14222 / CIP 103919 / JCM 8153 / KCTC 15104</strain>
    </source>
</reference>
<feature type="chain" id="PRO_1000066059" description="Alanine racemase">
    <location>
        <begin position="1"/>
        <end position="379"/>
    </location>
</feature>
<feature type="active site" description="Proton acceptor; specific for D-alanine" evidence="1">
    <location>
        <position position="35"/>
    </location>
</feature>
<feature type="active site" description="Proton acceptor; specific for L-alanine" evidence="1">
    <location>
        <position position="265"/>
    </location>
</feature>
<feature type="binding site" evidence="1">
    <location>
        <position position="133"/>
    </location>
    <ligand>
        <name>substrate</name>
    </ligand>
</feature>
<feature type="binding site" evidence="1">
    <location>
        <position position="312"/>
    </location>
    <ligand>
        <name>substrate</name>
    </ligand>
</feature>
<feature type="modified residue" description="N6-(pyridoxal phosphate)lysine" evidence="1">
    <location>
        <position position="35"/>
    </location>
</feature>
<dbReference type="EC" id="5.1.1.1" evidence="1"/>
<dbReference type="EMBL" id="AE017226">
    <property type="protein sequence ID" value="AAS11584.1"/>
    <property type="molecule type" value="Genomic_DNA"/>
</dbReference>
<dbReference type="RefSeq" id="NP_971703.1">
    <property type="nucleotide sequence ID" value="NC_002967.9"/>
</dbReference>
<dbReference type="RefSeq" id="WP_002682404.1">
    <property type="nucleotide sequence ID" value="NC_002967.9"/>
</dbReference>
<dbReference type="SMR" id="Q73NQ7"/>
<dbReference type="STRING" id="243275.TDE_1095"/>
<dbReference type="PaxDb" id="243275-TDE_1095"/>
<dbReference type="GeneID" id="2740225"/>
<dbReference type="KEGG" id="tde:TDE_1095"/>
<dbReference type="PATRIC" id="fig|243275.7.peg.1054"/>
<dbReference type="eggNOG" id="COG0787">
    <property type="taxonomic scope" value="Bacteria"/>
</dbReference>
<dbReference type="HOGENOM" id="CLU_028393_2_2_12"/>
<dbReference type="OrthoDB" id="9813814at2"/>
<dbReference type="UniPathway" id="UPA00042">
    <property type="reaction ID" value="UER00497"/>
</dbReference>
<dbReference type="Proteomes" id="UP000008212">
    <property type="component" value="Chromosome"/>
</dbReference>
<dbReference type="GO" id="GO:0005829">
    <property type="term" value="C:cytosol"/>
    <property type="evidence" value="ECO:0007669"/>
    <property type="project" value="TreeGrafter"/>
</dbReference>
<dbReference type="GO" id="GO:0008784">
    <property type="term" value="F:alanine racemase activity"/>
    <property type="evidence" value="ECO:0007669"/>
    <property type="project" value="UniProtKB-UniRule"/>
</dbReference>
<dbReference type="GO" id="GO:0030170">
    <property type="term" value="F:pyridoxal phosphate binding"/>
    <property type="evidence" value="ECO:0007669"/>
    <property type="project" value="UniProtKB-UniRule"/>
</dbReference>
<dbReference type="GO" id="GO:0030632">
    <property type="term" value="P:D-alanine biosynthetic process"/>
    <property type="evidence" value="ECO:0007669"/>
    <property type="project" value="UniProtKB-UniRule"/>
</dbReference>
<dbReference type="CDD" id="cd00430">
    <property type="entry name" value="PLPDE_III_AR"/>
    <property type="match status" value="1"/>
</dbReference>
<dbReference type="FunFam" id="3.20.20.10:FF:000002">
    <property type="entry name" value="Alanine racemase"/>
    <property type="match status" value="1"/>
</dbReference>
<dbReference type="Gene3D" id="3.20.20.10">
    <property type="entry name" value="Alanine racemase"/>
    <property type="match status" value="1"/>
</dbReference>
<dbReference type="Gene3D" id="2.40.37.10">
    <property type="entry name" value="Lyase, Ornithine Decarboxylase, Chain A, domain 1"/>
    <property type="match status" value="1"/>
</dbReference>
<dbReference type="HAMAP" id="MF_01201">
    <property type="entry name" value="Ala_racemase"/>
    <property type="match status" value="1"/>
</dbReference>
<dbReference type="InterPro" id="IPR000821">
    <property type="entry name" value="Ala_racemase"/>
</dbReference>
<dbReference type="InterPro" id="IPR009006">
    <property type="entry name" value="Ala_racemase/Decarboxylase_C"/>
</dbReference>
<dbReference type="InterPro" id="IPR011079">
    <property type="entry name" value="Ala_racemase_C"/>
</dbReference>
<dbReference type="InterPro" id="IPR001608">
    <property type="entry name" value="Ala_racemase_N"/>
</dbReference>
<dbReference type="InterPro" id="IPR020622">
    <property type="entry name" value="Ala_racemase_pyridoxalP-BS"/>
</dbReference>
<dbReference type="InterPro" id="IPR029066">
    <property type="entry name" value="PLP-binding_barrel"/>
</dbReference>
<dbReference type="NCBIfam" id="TIGR00492">
    <property type="entry name" value="alr"/>
    <property type="match status" value="1"/>
</dbReference>
<dbReference type="PANTHER" id="PTHR30511">
    <property type="entry name" value="ALANINE RACEMASE"/>
    <property type="match status" value="1"/>
</dbReference>
<dbReference type="PANTHER" id="PTHR30511:SF0">
    <property type="entry name" value="ALANINE RACEMASE, CATABOLIC-RELATED"/>
    <property type="match status" value="1"/>
</dbReference>
<dbReference type="Pfam" id="PF00842">
    <property type="entry name" value="Ala_racemase_C"/>
    <property type="match status" value="1"/>
</dbReference>
<dbReference type="Pfam" id="PF01168">
    <property type="entry name" value="Ala_racemase_N"/>
    <property type="match status" value="1"/>
</dbReference>
<dbReference type="PRINTS" id="PR00992">
    <property type="entry name" value="ALARACEMASE"/>
</dbReference>
<dbReference type="SMART" id="SM01005">
    <property type="entry name" value="Ala_racemase_C"/>
    <property type="match status" value="1"/>
</dbReference>
<dbReference type="SUPFAM" id="SSF50621">
    <property type="entry name" value="Alanine racemase C-terminal domain-like"/>
    <property type="match status" value="1"/>
</dbReference>
<dbReference type="SUPFAM" id="SSF51419">
    <property type="entry name" value="PLP-binding barrel"/>
    <property type="match status" value="1"/>
</dbReference>
<dbReference type="PROSITE" id="PS00395">
    <property type="entry name" value="ALANINE_RACEMASE"/>
    <property type="match status" value="1"/>
</dbReference>
<gene>
    <name type="primary">alr</name>
    <name type="ordered locus">TDE_1095</name>
</gene>
<accession>Q73NQ7</accession>
<comment type="function">
    <text evidence="1">Catalyzes the interconversion of L-alanine and D-alanine. May also act on other amino acids.</text>
</comment>
<comment type="catalytic activity">
    <reaction evidence="1">
        <text>L-alanine = D-alanine</text>
        <dbReference type="Rhea" id="RHEA:20249"/>
        <dbReference type="ChEBI" id="CHEBI:57416"/>
        <dbReference type="ChEBI" id="CHEBI:57972"/>
        <dbReference type="EC" id="5.1.1.1"/>
    </reaction>
</comment>
<comment type="cofactor">
    <cofactor evidence="1">
        <name>pyridoxal 5'-phosphate</name>
        <dbReference type="ChEBI" id="CHEBI:597326"/>
    </cofactor>
</comment>
<comment type="pathway">
    <text evidence="1">Amino-acid biosynthesis; D-alanine biosynthesis; D-alanine from L-alanine: step 1/1.</text>
</comment>
<comment type="similarity">
    <text evidence="1">Belongs to the alanine racemase family.</text>
</comment>
<evidence type="ECO:0000255" key="1">
    <source>
        <dbReference type="HAMAP-Rule" id="MF_01201"/>
    </source>
</evidence>
<proteinExistence type="inferred from homology"/>
<protein>
    <recommendedName>
        <fullName evidence="1">Alanine racemase</fullName>
        <ecNumber evidence="1">5.1.1.1</ecNumber>
    </recommendedName>
</protein>
<name>ALR_TREDE</name>
<sequence>MRATKAIIHLDNLQYNIKEIKKRLNKNVKICLPVKADAYGHGAVRVAVAAIRAGVSYLAVASIQEAVELREAGIVAPIISLSLPVLEEIPELLKYDIEPLVIDEEFINDLNRFAKKLNKKAWVHLKIDTGMRRIGCSPMEAVKLAVQIDRAENLELKGVCTHFAVSDSTDEKNIKFTKKQISVFKDSIKEIKKAGINPGLIHAANSGSVLQYPEAQFDMVRPGILVYGYAPSPSLNSLIDLKPVMELVTQVVLIKKIEKDTSVSYDRCWTAEKETFVATLPIGYADGLMRSLSGLKVRIGKDFFPIIGRICMDQCMIDIGASPWVQRWDEVCIFGPVSKEHPKNNTAQDLAKIAGTIPYELTCDINKRVPRIFIDETIQ</sequence>
<organism>
    <name type="scientific">Treponema denticola (strain ATCC 35405 / DSM 14222 / CIP 103919 / JCM 8153 / KCTC 15104)</name>
    <dbReference type="NCBI Taxonomy" id="243275"/>
    <lineage>
        <taxon>Bacteria</taxon>
        <taxon>Pseudomonadati</taxon>
        <taxon>Spirochaetota</taxon>
        <taxon>Spirochaetia</taxon>
        <taxon>Spirochaetales</taxon>
        <taxon>Treponemataceae</taxon>
        <taxon>Treponema</taxon>
    </lineage>
</organism>
<keyword id="KW-0413">Isomerase</keyword>
<keyword id="KW-0663">Pyridoxal phosphate</keyword>
<keyword id="KW-1185">Reference proteome</keyword>